<comment type="function">
    <text evidence="5 6">Binds to a DNA sequence element required for the expression of the dopa decarboxylase gene (Ddc) in specific dopaminergic neurons. Could also play an early role in specific ectodermal cells, and a subsequent role in the embryonic nervous system.</text>
</comment>
<comment type="subcellular location">
    <subcellularLocation>
        <location>Nucleus</location>
    </subcellularLocation>
</comment>
<comment type="tissue specificity">
    <text evidence="4 5 6">Coexpressed with acj6 in overlapping subsets of neurons in the embryonic epidermis and central nervous system. First detected in the precursor of the tracheal pits and the stomodeal invagination and later in the peripheral nervous system.</text>
</comment>
<comment type="developmental stage">
    <text evidence="5">Expressed at maximal levels in early embryos (6-12 hours). Expressed at lower levels during development.</text>
</comment>
<comment type="similarity">
    <text evidence="7">Belongs to the POU transcription factor family. Class-3 subfamily.</text>
</comment>
<comment type="caution">
    <text evidence="8">Was originally thought to interact with acj6.</text>
</comment>
<comment type="sequence caution" evidence="7">
    <conflict type="frameshift">
        <sequence resource="EMBL-CDS" id="CAA41341"/>
    </conflict>
</comment>
<evidence type="ECO:0000255" key="1">
    <source>
        <dbReference type="PROSITE-ProRule" id="PRU00108"/>
    </source>
</evidence>
<evidence type="ECO:0000255" key="2">
    <source>
        <dbReference type="PROSITE-ProRule" id="PRU00530"/>
    </source>
</evidence>
<evidence type="ECO:0000256" key="3">
    <source>
        <dbReference type="SAM" id="MobiDB-lite"/>
    </source>
</evidence>
<evidence type="ECO:0000269" key="4">
    <source>
    </source>
</evidence>
<evidence type="ECO:0000269" key="5">
    <source>
    </source>
</evidence>
<evidence type="ECO:0000269" key="6">
    <source>
    </source>
</evidence>
<evidence type="ECO:0000305" key="7"/>
<evidence type="ECO:0000305" key="8">
    <source>
    </source>
</evidence>
<keyword id="KW-0010">Activator</keyword>
<keyword id="KW-0238">DNA-binding</keyword>
<keyword id="KW-0371">Homeobox</keyword>
<keyword id="KW-0539">Nucleus</keyword>
<keyword id="KW-1185">Reference proteome</keyword>
<keyword id="KW-0804">Transcription</keyword>
<keyword id="KW-0805">Transcription regulation</keyword>
<feature type="chain" id="PRO_0000100774" description="POU domain protein CF1A">
    <location>
        <begin position="1"/>
        <end position="427"/>
    </location>
</feature>
<feature type="domain" description="POU-specific" evidence="2">
    <location>
        <begin position="212"/>
        <end position="286"/>
    </location>
</feature>
<feature type="DNA-binding region" description="Homeobox" evidence="1">
    <location>
        <begin position="304"/>
        <end position="363"/>
    </location>
</feature>
<feature type="region of interest" description="Disordered" evidence="3">
    <location>
        <begin position="39"/>
        <end position="77"/>
    </location>
</feature>
<feature type="region of interest" description="Disordered" evidence="3">
    <location>
        <begin position="196"/>
        <end position="217"/>
    </location>
</feature>
<feature type="region of interest" description="Disordered" evidence="3">
    <location>
        <begin position="288"/>
        <end position="309"/>
    </location>
</feature>
<feature type="region of interest" description="Disordered" evidence="3">
    <location>
        <begin position="390"/>
        <end position="427"/>
    </location>
</feature>
<feature type="compositionally biased region" description="Low complexity" evidence="3">
    <location>
        <begin position="49"/>
        <end position="66"/>
    </location>
</feature>
<feature type="compositionally biased region" description="Gly residues" evidence="3">
    <location>
        <begin position="67"/>
        <end position="77"/>
    </location>
</feature>
<feature type="sequence conflict" description="In Ref. 6; CAA36496." evidence="7" ref="6">
    <original>SWSALHPDPWMQTHHTHHLP</original>
    <variation>LMECPPSGSVDANPSYAPSA</variation>
    <location>
        <begin position="83"/>
        <end position="102"/>
    </location>
</feature>
<feature type="sequence conflict" description="In Ref. 6; CAA36496." evidence="7" ref="6">
    <original>GMASPHAAWHA</original>
    <variation>ACLAPCRLAC</variation>
    <location>
        <begin position="130"/>
        <end position="140"/>
    </location>
</feature>
<feature type="sequence conflict" description="In Ref. 6; CAA36496." evidence="7" ref="6">
    <original>A</original>
    <variation>G</variation>
    <location>
        <position position="147"/>
    </location>
</feature>
<feature type="sequence conflict" description="In Ref. 5; AAO39521." evidence="7" ref="5">
    <original>H</original>
    <variation>N</variation>
    <location>
        <position position="169"/>
    </location>
</feature>
<feature type="sequence conflict" description="In Ref. 6; CAA36496." evidence="7" ref="6">
    <original>PPNTLGGDMMDG</original>
    <variation>AKYARRRHDGR</variation>
    <location>
        <begin position="364"/>
        <end position="375"/>
    </location>
</feature>
<name>CF1A_DROME</name>
<accession>P16241</accession>
<accession>Q24460</accession>
<accession>Q86P26</accession>
<accession>Q9VRY9</accession>
<organism>
    <name type="scientific">Drosophila melanogaster</name>
    <name type="common">Fruit fly</name>
    <dbReference type="NCBI Taxonomy" id="7227"/>
    <lineage>
        <taxon>Eukaryota</taxon>
        <taxon>Metazoa</taxon>
        <taxon>Ecdysozoa</taxon>
        <taxon>Arthropoda</taxon>
        <taxon>Hexapoda</taxon>
        <taxon>Insecta</taxon>
        <taxon>Pterygota</taxon>
        <taxon>Neoptera</taxon>
        <taxon>Endopterygota</taxon>
        <taxon>Diptera</taxon>
        <taxon>Brachycera</taxon>
        <taxon>Muscomorpha</taxon>
        <taxon>Ephydroidea</taxon>
        <taxon>Drosophilidae</taxon>
        <taxon>Drosophila</taxon>
        <taxon>Sophophora</taxon>
    </lineage>
</organism>
<reference key="1">
    <citation type="journal article" date="1991" name="Nature">
        <title>I-POU: a POU-domain protein that inhibits neuron-specific gene activation.</title>
        <authorList>
            <person name="Treacy M.N."/>
            <person name="He X."/>
            <person name="Rosenfeld M.G."/>
        </authorList>
    </citation>
    <scope>NUCLEOTIDE SEQUENCE [MRNA]</scope>
    <scope>TISSUE SPECIFICITY</scope>
</reference>
<reference key="2">
    <citation type="journal article" date="1991" name="Mech. Dev.">
        <title>Isolation of a family of Drosophila POU domain genes expressed in early development.</title>
        <authorList>
            <person name="Billin A.N."/>
            <person name="Cockerill K.A."/>
            <person name="Poole S.J."/>
        </authorList>
    </citation>
    <scope>NUCLEOTIDE SEQUENCE [MRNA]</scope>
    <scope>FUNCTION</scope>
    <scope>TISSUE SPECIFICITY</scope>
    <scope>DEVELOPMENTAL STAGE</scope>
    <source>
        <strain>Oregon-R</strain>
        <tissue>Embryo</tissue>
    </source>
</reference>
<reference key="3">
    <citation type="journal article" date="2000" name="Science">
        <title>The genome sequence of Drosophila melanogaster.</title>
        <authorList>
            <person name="Adams M.D."/>
            <person name="Celniker S.E."/>
            <person name="Holt R.A."/>
            <person name="Evans C.A."/>
            <person name="Gocayne J.D."/>
            <person name="Amanatides P.G."/>
            <person name="Scherer S.E."/>
            <person name="Li P.W."/>
            <person name="Hoskins R.A."/>
            <person name="Galle R.F."/>
            <person name="George R.A."/>
            <person name="Lewis S.E."/>
            <person name="Richards S."/>
            <person name="Ashburner M."/>
            <person name="Henderson S.N."/>
            <person name="Sutton G.G."/>
            <person name="Wortman J.R."/>
            <person name="Yandell M.D."/>
            <person name="Zhang Q."/>
            <person name="Chen L.X."/>
            <person name="Brandon R.C."/>
            <person name="Rogers Y.-H.C."/>
            <person name="Blazej R.G."/>
            <person name="Champe M."/>
            <person name="Pfeiffer B.D."/>
            <person name="Wan K.H."/>
            <person name="Doyle C."/>
            <person name="Baxter E.G."/>
            <person name="Helt G."/>
            <person name="Nelson C.R."/>
            <person name="Miklos G.L.G."/>
            <person name="Abril J.F."/>
            <person name="Agbayani A."/>
            <person name="An H.-J."/>
            <person name="Andrews-Pfannkoch C."/>
            <person name="Baldwin D."/>
            <person name="Ballew R.M."/>
            <person name="Basu A."/>
            <person name="Baxendale J."/>
            <person name="Bayraktaroglu L."/>
            <person name="Beasley E.M."/>
            <person name="Beeson K.Y."/>
            <person name="Benos P.V."/>
            <person name="Berman B.P."/>
            <person name="Bhandari D."/>
            <person name="Bolshakov S."/>
            <person name="Borkova D."/>
            <person name="Botchan M.R."/>
            <person name="Bouck J."/>
            <person name="Brokstein P."/>
            <person name="Brottier P."/>
            <person name="Burtis K.C."/>
            <person name="Busam D.A."/>
            <person name="Butler H."/>
            <person name="Cadieu E."/>
            <person name="Center A."/>
            <person name="Chandra I."/>
            <person name="Cherry J.M."/>
            <person name="Cawley S."/>
            <person name="Dahlke C."/>
            <person name="Davenport L.B."/>
            <person name="Davies P."/>
            <person name="de Pablos B."/>
            <person name="Delcher A."/>
            <person name="Deng Z."/>
            <person name="Mays A.D."/>
            <person name="Dew I."/>
            <person name="Dietz S.M."/>
            <person name="Dodson K."/>
            <person name="Doup L.E."/>
            <person name="Downes M."/>
            <person name="Dugan-Rocha S."/>
            <person name="Dunkov B.C."/>
            <person name="Dunn P."/>
            <person name="Durbin K.J."/>
            <person name="Evangelista C.C."/>
            <person name="Ferraz C."/>
            <person name="Ferriera S."/>
            <person name="Fleischmann W."/>
            <person name="Fosler C."/>
            <person name="Gabrielian A.E."/>
            <person name="Garg N.S."/>
            <person name="Gelbart W.M."/>
            <person name="Glasser K."/>
            <person name="Glodek A."/>
            <person name="Gong F."/>
            <person name="Gorrell J.H."/>
            <person name="Gu Z."/>
            <person name="Guan P."/>
            <person name="Harris M."/>
            <person name="Harris N.L."/>
            <person name="Harvey D.A."/>
            <person name="Heiman T.J."/>
            <person name="Hernandez J.R."/>
            <person name="Houck J."/>
            <person name="Hostin D."/>
            <person name="Houston K.A."/>
            <person name="Howland T.J."/>
            <person name="Wei M.-H."/>
            <person name="Ibegwam C."/>
            <person name="Jalali M."/>
            <person name="Kalush F."/>
            <person name="Karpen G.H."/>
            <person name="Ke Z."/>
            <person name="Kennison J.A."/>
            <person name="Ketchum K.A."/>
            <person name="Kimmel B.E."/>
            <person name="Kodira C.D."/>
            <person name="Kraft C.L."/>
            <person name="Kravitz S."/>
            <person name="Kulp D."/>
            <person name="Lai Z."/>
            <person name="Lasko P."/>
            <person name="Lei Y."/>
            <person name="Levitsky A.A."/>
            <person name="Li J.H."/>
            <person name="Li Z."/>
            <person name="Liang Y."/>
            <person name="Lin X."/>
            <person name="Liu X."/>
            <person name="Mattei B."/>
            <person name="McIntosh T.C."/>
            <person name="McLeod M.P."/>
            <person name="McPherson D."/>
            <person name="Merkulov G."/>
            <person name="Milshina N.V."/>
            <person name="Mobarry C."/>
            <person name="Morris J."/>
            <person name="Moshrefi A."/>
            <person name="Mount S.M."/>
            <person name="Moy M."/>
            <person name="Murphy B."/>
            <person name="Murphy L."/>
            <person name="Muzny D.M."/>
            <person name="Nelson D.L."/>
            <person name="Nelson D.R."/>
            <person name="Nelson K.A."/>
            <person name="Nixon K."/>
            <person name="Nusskern D.R."/>
            <person name="Pacleb J.M."/>
            <person name="Palazzolo M."/>
            <person name="Pittman G.S."/>
            <person name="Pan S."/>
            <person name="Pollard J."/>
            <person name="Puri V."/>
            <person name="Reese M.G."/>
            <person name="Reinert K."/>
            <person name="Remington K."/>
            <person name="Saunders R.D.C."/>
            <person name="Scheeler F."/>
            <person name="Shen H."/>
            <person name="Shue B.C."/>
            <person name="Siden-Kiamos I."/>
            <person name="Simpson M."/>
            <person name="Skupski M.P."/>
            <person name="Smith T.J."/>
            <person name="Spier E."/>
            <person name="Spradling A.C."/>
            <person name="Stapleton M."/>
            <person name="Strong R."/>
            <person name="Sun E."/>
            <person name="Svirskas R."/>
            <person name="Tector C."/>
            <person name="Turner R."/>
            <person name="Venter E."/>
            <person name="Wang A.H."/>
            <person name="Wang X."/>
            <person name="Wang Z.-Y."/>
            <person name="Wassarman D.A."/>
            <person name="Weinstock G.M."/>
            <person name="Weissenbach J."/>
            <person name="Williams S.M."/>
            <person name="Woodage T."/>
            <person name="Worley K.C."/>
            <person name="Wu D."/>
            <person name="Yang S."/>
            <person name="Yao Q.A."/>
            <person name="Ye J."/>
            <person name="Yeh R.-F."/>
            <person name="Zaveri J.S."/>
            <person name="Zhan M."/>
            <person name="Zhang G."/>
            <person name="Zhao Q."/>
            <person name="Zheng L."/>
            <person name="Zheng X.H."/>
            <person name="Zhong F.N."/>
            <person name="Zhong W."/>
            <person name="Zhou X."/>
            <person name="Zhu S.C."/>
            <person name="Zhu X."/>
            <person name="Smith H.O."/>
            <person name="Gibbs R.A."/>
            <person name="Myers E.W."/>
            <person name="Rubin G.M."/>
            <person name="Venter J.C."/>
        </authorList>
    </citation>
    <scope>NUCLEOTIDE SEQUENCE [LARGE SCALE GENOMIC DNA]</scope>
    <source>
        <strain>Berkeley</strain>
    </source>
</reference>
<reference key="4">
    <citation type="journal article" date="2002" name="Genome Biol.">
        <title>Annotation of the Drosophila melanogaster euchromatic genome: a systematic review.</title>
        <authorList>
            <person name="Misra S."/>
            <person name="Crosby M.A."/>
            <person name="Mungall C.J."/>
            <person name="Matthews B.B."/>
            <person name="Campbell K.S."/>
            <person name="Hradecky P."/>
            <person name="Huang Y."/>
            <person name="Kaminker J.S."/>
            <person name="Millburn G.H."/>
            <person name="Prochnik S.E."/>
            <person name="Smith C.D."/>
            <person name="Tupy J.L."/>
            <person name="Whitfield E.J."/>
            <person name="Bayraktaroglu L."/>
            <person name="Berman B.P."/>
            <person name="Bettencourt B.R."/>
            <person name="Celniker S.E."/>
            <person name="de Grey A.D.N.J."/>
            <person name="Drysdale R.A."/>
            <person name="Harris N.L."/>
            <person name="Richter J."/>
            <person name="Russo S."/>
            <person name="Schroeder A.J."/>
            <person name="Shu S.Q."/>
            <person name="Stapleton M."/>
            <person name="Yamada C."/>
            <person name="Ashburner M."/>
            <person name="Gelbart W.M."/>
            <person name="Rubin G.M."/>
            <person name="Lewis S.E."/>
        </authorList>
    </citation>
    <scope>GENOME REANNOTATION</scope>
    <source>
        <strain>Berkeley</strain>
    </source>
</reference>
<reference key="5">
    <citation type="submission" date="2003-02" db="EMBL/GenBank/DDBJ databases">
        <authorList>
            <person name="Stapleton M."/>
            <person name="Brokstein P."/>
            <person name="Hong L."/>
            <person name="Agbayani A."/>
            <person name="Carlson J.W."/>
            <person name="Champe M."/>
            <person name="Chavez C."/>
            <person name="Dorsett V."/>
            <person name="Dresnek D."/>
            <person name="Farfan D."/>
            <person name="Frise E."/>
            <person name="George R.A."/>
            <person name="Gonzalez M."/>
            <person name="Guarin H."/>
            <person name="Kronmiller B."/>
            <person name="Li P.W."/>
            <person name="Liao G."/>
            <person name="Miranda A."/>
            <person name="Mungall C.J."/>
            <person name="Nunoo J."/>
            <person name="Pacleb J.M."/>
            <person name="Paragas V."/>
            <person name="Park S."/>
            <person name="Patel S."/>
            <person name="Phouanenavong S."/>
            <person name="Wan K.H."/>
            <person name="Yu C."/>
            <person name="Lewis S.E."/>
            <person name="Rubin G.M."/>
            <person name="Celniker S.E."/>
        </authorList>
    </citation>
    <scope>NUCLEOTIDE SEQUENCE [LARGE SCALE MRNA]</scope>
    <source>
        <strain>Berkeley</strain>
        <tissue>Embryo</tissue>
    </source>
</reference>
<reference key="6">
    <citation type="journal article" date="1990" name="Nature">
        <title>Binding of a Drosophila POU-domain protein to a sequence element regulating gene expression in specific dopaminergic neurons.</title>
        <authorList>
            <person name="Johnson W.A."/>
            <person name="Hirsh J."/>
        </authorList>
    </citation>
    <scope>NUCLEOTIDE SEQUENCE [GENOMIC DNA] OF 83-427</scope>
    <scope>FUNCTION</scope>
    <scope>TISSUE SPECIFICITY</scope>
</reference>
<reference key="7">
    <citation type="journal article" date="1996" name="Proc. Natl. Acad. Sci. U.S.A.">
        <title>Similar DNA recognition properties of alternatively spliced Drosophila POU factors.</title>
        <authorList>
            <person name="Turner E.E."/>
        </authorList>
    </citation>
    <scope>SHOWS THAT CF1A DOES NOT ASSOCIATE WITH ACJ6</scope>
</reference>
<proteinExistence type="evidence at transcript level"/>
<protein>
    <recommendedName>
        <fullName>POU domain protein CF1A</fullName>
    </recommendedName>
    <alternativeName>
        <fullName>Chorion factor 1A</fullName>
        <shortName>CF1-A</shortName>
    </alternativeName>
    <alternativeName>
        <fullName>Protein drifter</fullName>
    </alternativeName>
    <alternativeName>
        <fullName>Ventral veins lacking protein</fullName>
    </alternativeName>
</protein>
<dbReference type="EMBL" id="X58435">
    <property type="protein sequence ID" value="CAA41341.1"/>
    <property type="status" value="ALT_FRAME"/>
    <property type="molecule type" value="mRNA"/>
</dbReference>
<dbReference type="EMBL" id="M81959">
    <property type="protein sequence ID" value="AAA28831.1"/>
    <property type="molecule type" value="mRNA"/>
</dbReference>
<dbReference type="EMBL" id="AE014296">
    <property type="protein sequence ID" value="AAF50641.3"/>
    <property type="molecule type" value="Genomic_DNA"/>
</dbReference>
<dbReference type="EMBL" id="BT003517">
    <property type="protein sequence ID" value="AAO39521.1"/>
    <property type="molecule type" value="mRNA"/>
</dbReference>
<dbReference type="EMBL" id="X52252">
    <property type="protein sequence ID" value="CAA36496.1"/>
    <property type="molecule type" value="Genomic_DNA"/>
</dbReference>
<dbReference type="PIR" id="S19095">
    <property type="entry name" value="S19095"/>
</dbReference>
<dbReference type="RefSeq" id="NP_001286957.1">
    <property type="nucleotide sequence ID" value="NM_001300028.1"/>
</dbReference>
<dbReference type="RefSeq" id="NP_523948.1">
    <property type="nucleotide sequence ID" value="NM_079224.5"/>
</dbReference>
<dbReference type="SMR" id="P16241"/>
<dbReference type="BioGRID" id="64202">
    <property type="interactions" value="23"/>
</dbReference>
<dbReference type="DIP" id="DIP-17200N"/>
<dbReference type="FunCoup" id="P16241">
    <property type="interactions" value="277"/>
</dbReference>
<dbReference type="IntAct" id="P16241">
    <property type="interactions" value="7"/>
</dbReference>
<dbReference type="STRING" id="7227.FBpp0312431"/>
<dbReference type="PaxDb" id="7227-FBpp0076653"/>
<dbReference type="DNASU" id="38752"/>
<dbReference type="EnsemblMetazoa" id="FBtr0076944">
    <property type="protein sequence ID" value="FBpp0076653"/>
    <property type="gene ID" value="FBgn0086680"/>
</dbReference>
<dbReference type="EnsemblMetazoa" id="FBtr0345911">
    <property type="protein sequence ID" value="FBpp0311831"/>
    <property type="gene ID" value="FBgn0086680"/>
</dbReference>
<dbReference type="GeneID" id="38752"/>
<dbReference type="KEGG" id="dme:Dmel_CG10037"/>
<dbReference type="AGR" id="FB:FBgn0086680"/>
<dbReference type="CTD" id="38752"/>
<dbReference type="FlyBase" id="FBgn0086680">
    <property type="gene designation" value="vvl"/>
</dbReference>
<dbReference type="VEuPathDB" id="VectorBase:FBgn0086680"/>
<dbReference type="eggNOG" id="KOG3802">
    <property type="taxonomic scope" value="Eukaryota"/>
</dbReference>
<dbReference type="GeneTree" id="ENSGT00940000171806"/>
<dbReference type="HOGENOM" id="CLU_404003_0_0_1"/>
<dbReference type="InParanoid" id="P16241"/>
<dbReference type="OMA" id="VASRFEW"/>
<dbReference type="OrthoDB" id="6358449at2759"/>
<dbReference type="Reactome" id="R-DME-373752">
    <property type="pathway name" value="Netrin-1 signaling"/>
</dbReference>
<dbReference type="Reactome" id="R-DME-418885">
    <property type="pathway name" value="DCC mediated attractive signaling"/>
</dbReference>
<dbReference type="Reactome" id="R-DME-418886">
    <property type="pathway name" value="Netrin mediated repulsion signals"/>
</dbReference>
<dbReference type="SignaLink" id="P16241"/>
<dbReference type="BioGRID-ORCS" id="38752">
    <property type="hits" value="0 hits in 3 CRISPR screens"/>
</dbReference>
<dbReference type="ChiTaRS" id="vvl">
    <property type="organism name" value="fly"/>
</dbReference>
<dbReference type="GenomeRNAi" id="38752"/>
<dbReference type="PRO" id="PR:P16241"/>
<dbReference type="Proteomes" id="UP000000803">
    <property type="component" value="Chromosome 3L"/>
</dbReference>
<dbReference type="Bgee" id="FBgn0086680">
    <property type="expression patterns" value="Expressed in adult tracheocyte (Drosophila) in insect leg and 217 other cell types or tissues"/>
</dbReference>
<dbReference type="ExpressionAtlas" id="P16241">
    <property type="expression patterns" value="baseline and differential"/>
</dbReference>
<dbReference type="GO" id="GO:0005634">
    <property type="term" value="C:nucleus"/>
    <property type="evidence" value="ECO:0000314"/>
    <property type="project" value="FlyBase"/>
</dbReference>
<dbReference type="GO" id="GO:0001228">
    <property type="term" value="F:DNA-binding transcription activator activity, RNA polymerase II-specific"/>
    <property type="evidence" value="ECO:0000314"/>
    <property type="project" value="FlyBase"/>
</dbReference>
<dbReference type="GO" id="GO:0000981">
    <property type="term" value="F:DNA-binding transcription factor activity, RNA polymerase II-specific"/>
    <property type="evidence" value="ECO:0000318"/>
    <property type="project" value="GO_Central"/>
</dbReference>
<dbReference type="GO" id="GO:0000978">
    <property type="term" value="F:RNA polymerase II cis-regulatory region sequence-specific DNA binding"/>
    <property type="evidence" value="ECO:0000314"/>
    <property type="project" value="FlyBase"/>
</dbReference>
<dbReference type="GO" id="GO:0000977">
    <property type="term" value="F:RNA polymerase II transcription regulatory region sequence-specific DNA binding"/>
    <property type="evidence" value="ECO:0000314"/>
    <property type="project" value="FlyBase"/>
</dbReference>
<dbReference type="GO" id="GO:0007420">
    <property type="term" value="P:brain development"/>
    <property type="evidence" value="ECO:0000315"/>
    <property type="project" value="FlyBase"/>
</dbReference>
<dbReference type="GO" id="GO:0035284">
    <property type="term" value="P:brain segmentation"/>
    <property type="evidence" value="ECO:0000315"/>
    <property type="project" value="FlyBase"/>
</dbReference>
<dbReference type="GO" id="GO:0048813">
    <property type="term" value="P:dendrite morphogenesis"/>
    <property type="evidence" value="ECO:0000304"/>
    <property type="project" value="FlyBase"/>
</dbReference>
<dbReference type="GO" id="GO:0008045">
    <property type="term" value="P:motor neuron axon guidance"/>
    <property type="evidence" value="ECO:0000315"/>
    <property type="project" value="FlyBase"/>
</dbReference>
<dbReference type="GO" id="GO:0007422">
    <property type="term" value="P:peripheral nervous system development"/>
    <property type="evidence" value="ECO:0000315"/>
    <property type="project" value="FlyBase"/>
</dbReference>
<dbReference type="GO" id="GO:0002807">
    <property type="term" value="P:positive regulation of antimicrobial peptide biosynthetic process"/>
    <property type="evidence" value="ECO:0000314"/>
    <property type="project" value="FlyBase"/>
</dbReference>
<dbReference type="GO" id="GO:0045944">
    <property type="term" value="P:positive regulation of transcription by RNA polymerase II"/>
    <property type="evidence" value="ECO:0000314"/>
    <property type="project" value="FlyBase"/>
</dbReference>
<dbReference type="GO" id="GO:0048814">
    <property type="term" value="P:regulation of dendrite morphogenesis"/>
    <property type="evidence" value="ECO:0000315"/>
    <property type="project" value="FlyBase"/>
</dbReference>
<dbReference type="GO" id="GO:0006357">
    <property type="term" value="P:regulation of transcription by RNA polymerase II"/>
    <property type="evidence" value="ECO:0000318"/>
    <property type="project" value="GO_Central"/>
</dbReference>
<dbReference type="CDD" id="cd00086">
    <property type="entry name" value="homeodomain"/>
    <property type="match status" value="1"/>
</dbReference>
<dbReference type="FunFam" id="1.10.10.60:FF:000005">
    <property type="entry name" value="POU domain protein"/>
    <property type="match status" value="1"/>
</dbReference>
<dbReference type="FunFam" id="1.10.260.40:FF:000001">
    <property type="entry name" value="POU domain protein"/>
    <property type="match status" value="1"/>
</dbReference>
<dbReference type="Gene3D" id="1.10.10.60">
    <property type="entry name" value="Homeodomain-like"/>
    <property type="match status" value="1"/>
</dbReference>
<dbReference type="Gene3D" id="1.10.260.40">
    <property type="entry name" value="lambda repressor-like DNA-binding domains"/>
    <property type="match status" value="1"/>
</dbReference>
<dbReference type="InterPro" id="IPR001356">
    <property type="entry name" value="HD"/>
</dbReference>
<dbReference type="InterPro" id="IPR017970">
    <property type="entry name" value="Homeobox_CS"/>
</dbReference>
<dbReference type="InterPro" id="IPR009057">
    <property type="entry name" value="Homeodomain-like_sf"/>
</dbReference>
<dbReference type="InterPro" id="IPR010982">
    <property type="entry name" value="Lambda_DNA-bd_dom_sf"/>
</dbReference>
<dbReference type="InterPro" id="IPR013847">
    <property type="entry name" value="POU"/>
</dbReference>
<dbReference type="InterPro" id="IPR000327">
    <property type="entry name" value="POU_dom"/>
</dbReference>
<dbReference type="InterPro" id="IPR050255">
    <property type="entry name" value="POU_domain_TF"/>
</dbReference>
<dbReference type="InterPro" id="IPR016362">
    <property type="entry name" value="TF_POU_3"/>
</dbReference>
<dbReference type="PANTHER" id="PTHR11636">
    <property type="entry name" value="POU DOMAIN"/>
    <property type="match status" value="1"/>
</dbReference>
<dbReference type="PANTHER" id="PTHR11636:SF89">
    <property type="entry name" value="POU DOMAIN PROTEIN 2, ISOFORM B-RELATED"/>
    <property type="match status" value="1"/>
</dbReference>
<dbReference type="Pfam" id="PF00046">
    <property type="entry name" value="Homeodomain"/>
    <property type="match status" value="1"/>
</dbReference>
<dbReference type="Pfam" id="PF00157">
    <property type="entry name" value="Pou"/>
    <property type="match status" value="1"/>
</dbReference>
<dbReference type="PIRSF" id="PIRSF002629">
    <property type="entry name" value="Transcription_factor_POU"/>
    <property type="match status" value="1"/>
</dbReference>
<dbReference type="PRINTS" id="PR00028">
    <property type="entry name" value="POUDOMAIN"/>
</dbReference>
<dbReference type="SMART" id="SM00389">
    <property type="entry name" value="HOX"/>
    <property type="match status" value="1"/>
</dbReference>
<dbReference type="SMART" id="SM00352">
    <property type="entry name" value="POU"/>
    <property type="match status" value="1"/>
</dbReference>
<dbReference type="SUPFAM" id="SSF46689">
    <property type="entry name" value="Homeodomain-like"/>
    <property type="match status" value="1"/>
</dbReference>
<dbReference type="SUPFAM" id="SSF47413">
    <property type="entry name" value="lambda repressor-like DNA-binding domains"/>
    <property type="match status" value="1"/>
</dbReference>
<dbReference type="PROSITE" id="PS00027">
    <property type="entry name" value="HOMEOBOX_1"/>
    <property type="match status" value="1"/>
</dbReference>
<dbReference type="PROSITE" id="PS50071">
    <property type="entry name" value="HOMEOBOX_2"/>
    <property type="match status" value="1"/>
</dbReference>
<dbReference type="PROSITE" id="PS00035">
    <property type="entry name" value="POU_1"/>
    <property type="match status" value="1"/>
</dbReference>
<dbReference type="PROSITE" id="PS00465">
    <property type="entry name" value="POU_2"/>
    <property type="match status" value="1"/>
</dbReference>
<dbReference type="PROSITE" id="PS51179">
    <property type="entry name" value="POU_3"/>
    <property type="match status" value="1"/>
</dbReference>
<gene>
    <name type="primary">vvl</name>
    <name type="synonym">Cf1a</name>
    <name type="ORF">CG10037</name>
</gene>
<sequence length="427" mass="45927">MAATSYMTPPSGDLDMALGGGGYHTSSPRSAADAGEMKYMQHHHHHHAAAAAAAHHQLPSSPSPNGQGNGGGLGLGSGSGLGSWSALHPDPWMQTHHTHHLPAAAAVASAADTVKQEMSHLSQQTRIQQGMASPHAAWHAPHAGHYAPTGGSPLQYHHAMNGMLHHPAHAVAAAHHQSVAPLHHTLRGESPQLHIHHHMGGGDRDAISGGEEDTPTSDDLEAFAKQFKQRRIKLGFTQADVGLALGTLYGNVFSQTTICRFEALQLSFKNMCKLKPLLQKWLEEADSTTGSPTSIDKIAAQGRKRKKRTSIEVSVKGALEQHFHKQPKPSAQEITSLADSLQLEKEVVRVWFCNRRQKEKRMTPPNTLGGDMMDGMPPGHMHHGGYHPHHDMHGSPMGTHSHSHSPPMLSPQNMQSSAVAAHQLAAH</sequence>